<feature type="chain" id="PRO_0000078531" description="Chaperone protein DnaK">
    <location>
        <begin position="1"/>
        <end position="637"/>
    </location>
</feature>
<feature type="region of interest" description="Disordered" evidence="2">
    <location>
        <begin position="531"/>
        <end position="552"/>
    </location>
</feature>
<feature type="region of interest" description="Disordered" evidence="2">
    <location>
        <begin position="602"/>
        <end position="637"/>
    </location>
</feature>
<feature type="compositionally biased region" description="Acidic residues" evidence="2">
    <location>
        <begin position="621"/>
        <end position="631"/>
    </location>
</feature>
<feature type="modified residue" description="Phosphothreonine; by autocatalysis" evidence="1">
    <location>
        <position position="197"/>
    </location>
</feature>
<name>DNAK_RHOCA</name>
<comment type="function">
    <text evidence="1">Acts as a chaperone.</text>
</comment>
<comment type="induction">
    <text evidence="1">By stress conditions e.g. heat shock (By similarity).</text>
</comment>
<comment type="similarity">
    <text evidence="3">Belongs to the heat shock protein 70 family.</text>
</comment>
<evidence type="ECO:0000250" key="1"/>
<evidence type="ECO:0000256" key="2">
    <source>
        <dbReference type="SAM" id="MobiDB-lite"/>
    </source>
</evidence>
<evidence type="ECO:0000305" key="3"/>
<proteinExistence type="inferred from homology"/>
<organism>
    <name type="scientific">Rhodobacter capsulatus</name>
    <name type="common">Rhodopseudomonas capsulata</name>
    <dbReference type="NCBI Taxonomy" id="1061"/>
    <lineage>
        <taxon>Bacteria</taxon>
        <taxon>Pseudomonadati</taxon>
        <taxon>Pseudomonadota</taxon>
        <taxon>Alphaproteobacteria</taxon>
        <taxon>Rhodobacterales</taxon>
        <taxon>Rhodobacter group</taxon>
        <taxon>Rhodobacter</taxon>
    </lineage>
</organism>
<gene>
    <name type="primary">dnaK</name>
</gene>
<dbReference type="EMBL" id="U57637">
    <property type="protein sequence ID" value="AAC45473.1"/>
    <property type="molecule type" value="Genomic_DNA"/>
</dbReference>
<dbReference type="SMR" id="Q52701"/>
<dbReference type="GO" id="GO:0005524">
    <property type="term" value="F:ATP binding"/>
    <property type="evidence" value="ECO:0007669"/>
    <property type="project" value="UniProtKB-UniRule"/>
</dbReference>
<dbReference type="GO" id="GO:0140662">
    <property type="term" value="F:ATP-dependent protein folding chaperone"/>
    <property type="evidence" value="ECO:0007669"/>
    <property type="project" value="InterPro"/>
</dbReference>
<dbReference type="GO" id="GO:0051082">
    <property type="term" value="F:unfolded protein binding"/>
    <property type="evidence" value="ECO:0007669"/>
    <property type="project" value="InterPro"/>
</dbReference>
<dbReference type="FunFam" id="2.60.34.10:FF:000014">
    <property type="entry name" value="Chaperone protein DnaK HSP70"/>
    <property type="match status" value="1"/>
</dbReference>
<dbReference type="FunFam" id="3.30.30.30:FF:000003">
    <property type="entry name" value="Heat shock protein 9"/>
    <property type="match status" value="1"/>
</dbReference>
<dbReference type="FunFam" id="1.20.1270.10:FF:000001">
    <property type="entry name" value="Molecular chaperone DnaK"/>
    <property type="match status" value="1"/>
</dbReference>
<dbReference type="FunFam" id="3.30.420.40:FF:000004">
    <property type="entry name" value="Molecular chaperone DnaK"/>
    <property type="match status" value="1"/>
</dbReference>
<dbReference type="FunFam" id="3.90.640.10:FF:000003">
    <property type="entry name" value="Molecular chaperone DnaK"/>
    <property type="match status" value="1"/>
</dbReference>
<dbReference type="Gene3D" id="1.20.1270.10">
    <property type="match status" value="1"/>
</dbReference>
<dbReference type="Gene3D" id="3.30.420.40">
    <property type="match status" value="2"/>
</dbReference>
<dbReference type="Gene3D" id="3.90.640.10">
    <property type="entry name" value="Actin, Chain A, domain 4"/>
    <property type="match status" value="1"/>
</dbReference>
<dbReference type="Gene3D" id="2.60.34.10">
    <property type="entry name" value="Substrate Binding Domain Of DNAk, Chain A, domain 1"/>
    <property type="match status" value="1"/>
</dbReference>
<dbReference type="HAMAP" id="MF_00332">
    <property type="entry name" value="DnaK"/>
    <property type="match status" value="1"/>
</dbReference>
<dbReference type="InterPro" id="IPR043129">
    <property type="entry name" value="ATPase_NBD"/>
</dbReference>
<dbReference type="InterPro" id="IPR012725">
    <property type="entry name" value="Chaperone_DnaK"/>
</dbReference>
<dbReference type="InterPro" id="IPR018181">
    <property type="entry name" value="Heat_shock_70_CS"/>
</dbReference>
<dbReference type="InterPro" id="IPR029048">
    <property type="entry name" value="HSP70_C_sf"/>
</dbReference>
<dbReference type="InterPro" id="IPR029047">
    <property type="entry name" value="HSP70_peptide-bd_sf"/>
</dbReference>
<dbReference type="InterPro" id="IPR013126">
    <property type="entry name" value="Hsp_70_fam"/>
</dbReference>
<dbReference type="NCBIfam" id="NF001413">
    <property type="entry name" value="PRK00290.1"/>
    <property type="match status" value="1"/>
</dbReference>
<dbReference type="NCBIfam" id="NF003520">
    <property type="entry name" value="PRK05183.1"/>
    <property type="match status" value="1"/>
</dbReference>
<dbReference type="NCBIfam" id="TIGR02350">
    <property type="entry name" value="prok_dnaK"/>
    <property type="match status" value="1"/>
</dbReference>
<dbReference type="PANTHER" id="PTHR19375">
    <property type="entry name" value="HEAT SHOCK PROTEIN 70KDA"/>
    <property type="match status" value="1"/>
</dbReference>
<dbReference type="Pfam" id="PF00012">
    <property type="entry name" value="HSP70"/>
    <property type="match status" value="1"/>
</dbReference>
<dbReference type="PRINTS" id="PR00301">
    <property type="entry name" value="HEATSHOCK70"/>
</dbReference>
<dbReference type="SUPFAM" id="SSF53067">
    <property type="entry name" value="Actin-like ATPase domain"/>
    <property type="match status" value="2"/>
</dbReference>
<dbReference type="SUPFAM" id="SSF100934">
    <property type="entry name" value="Heat shock protein 70kD (HSP70), C-terminal subdomain"/>
    <property type="match status" value="1"/>
</dbReference>
<dbReference type="SUPFAM" id="SSF100920">
    <property type="entry name" value="Heat shock protein 70kD (HSP70), peptide-binding domain"/>
    <property type="match status" value="1"/>
</dbReference>
<dbReference type="PROSITE" id="PS00297">
    <property type="entry name" value="HSP70_1"/>
    <property type="match status" value="1"/>
</dbReference>
<dbReference type="PROSITE" id="PS00329">
    <property type="entry name" value="HSP70_2"/>
    <property type="match status" value="1"/>
</dbReference>
<dbReference type="PROSITE" id="PS01036">
    <property type="entry name" value="HSP70_3"/>
    <property type="match status" value="1"/>
</dbReference>
<protein>
    <recommendedName>
        <fullName>Chaperone protein DnaK</fullName>
    </recommendedName>
    <alternativeName>
        <fullName>HSP70</fullName>
    </alternativeName>
    <alternativeName>
        <fullName>Heat shock 70 kDa protein</fullName>
    </alternativeName>
    <alternativeName>
        <fullName>Heat shock protein 70</fullName>
    </alternativeName>
</protein>
<reference key="1">
    <citation type="submission" date="1996-05" db="EMBL/GenBank/DDBJ databases">
        <authorList>
            <person name="Nickel C.M."/>
        </authorList>
    </citation>
    <scope>NUCLEOTIDE SEQUENCE [GENOMIC DNA]</scope>
    <source>
        <strain>ATCC 33303 / B10</strain>
    </source>
</reference>
<accession>Q52701</accession>
<sequence>MAKVIGIDLGTTNSCVAIMDGSQPRVIENSEGARTTPSIVAYTDNERLVGQPAKRQAVTNPTNTVFAVKRLIGRRTTDAEVEKDKKLVPYNIVDGGNGDAWVEVRGEKFSPAQVSAVILQKMKETAESYLGETVTQAVITVPAYFNDAQRQATKDAGKIAGLEVLRIINEPTAAALAYGLDKKDSKTIAVYDLGGGTFDISVLEIDDGLFEVKSTNGDTFLGGEDFDMRIVNYLADEFKKEHGVDLTKDKMALQRLKEAAEKAKIELSSASQTEINQPFISMNAATGVPLHMVMKLTRAKLESLVDDLIKASLKPCAAALKDAGVSKDEIDEVVLVGGMTRMPRVVEEVTKFFGKEPHKGVNPDEVVALGAAIQAGVLQGDVKDVVLLDVTPLSLGIETLGGVFTRLIDRNTTIPTKKSQIFSTAEDNQNAVTIRVFQGEREMAADNKMLGMFNLENIPPAPRGVPQIEVTFDIDANGIVSVKAKDKGTGKEQQITIQASGGLSDDDIEKMIKDAEANAEADKKRKELVEAKNTGESLLHSTRKSLEEHGDKVDGSTVEMIELACNALEESLKSEDPGKIKGAVQNLTDAAMKLGEAIYKAQASEAGPASDDEDGPRSVDDDIVDADFEDMGENKRK</sequence>
<keyword id="KW-0067">ATP-binding</keyword>
<keyword id="KW-0143">Chaperone</keyword>
<keyword id="KW-0547">Nucleotide-binding</keyword>
<keyword id="KW-0597">Phosphoprotein</keyword>
<keyword id="KW-0346">Stress response</keyword>